<reference key="1">
    <citation type="journal article" date="2005" name="Biochem. Biophys. Res. Commun.">
        <title>Genomic organization and expression of 23 new genes from MATalpha locus of Cryptococcus neoformans var. gattii.</title>
        <authorList>
            <person name="Ren P."/>
            <person name="Roncaglia P."/>
            <person name="Springer D.J."/>
            <person name="Fan J."/>
            <person name="Chaturvedi V."/>
        </authorList>
    </citation>
    <scope>NUCLEOTIDE SEQUENCE [GENOMIC DNA]</scope>
    <source>
        <strain>ATCC 32609 / CBS 6956 / NIH 444 / Serotype B</strain>
    </source>
</reference>
<name>ATG9_CRYGA</name>
<organism>
    <name type="scientific">Cryptococcus gattii</name>
    <name type="common">Filobasidiella gattii</name>
    <name type="synonym">Cryptococcus bacillisporus</name>
    <dbReference type="NCBI Taxonomy" id="552467"/>
    <lineage>
        <taxon>Eukaryota</taxon>
        <taxon>Fungi</taxon>
        <taxon>Dikarya</taxon>
        <taxon>Basidiomycota</taxon>
        <taxon>Agaricomycotina</taxon>
        <taxon>Tremellomycetes</taxon>
        <taxon>Tremellales</taxon>
        <taxon>Cryptococcaceae</taxon>
        <taxon>Cryptococcus</taxon>
        <taxon>Cryptococcus gattii species complex</taxon>
    </lineage>
</organism>
<protein>
    <recommendedName>
        <fullName>Autophagy-related protein 9</fullName>
    </recommendedName>
</protein>
<gene>
    <name type="primary">ATG9</name>
    <name type="synonym">APG9</name>
</gene>
<proteinExistence type="inferred from homology"/>
<comment type="function">
    <text evidence="2">Phospholipid scramblase involved in autophagy and cytoplasm to vacuole transport (Cvt) vesicle formation. Cycles between the preautophagosomal structure/phagophore assembly site (PAS) and the cytoplasmic vesicle pool and supplies membrane for the growing autophagosome. Lipid scramblase activity plays a key role in preautophagosomal structure/phagophore assembly by distributing the phospholipids that arrive through ATG2 from the cytoplasmic to the luminal leaflet of the bilayer, thereby driving autophagosomal membrane expansion. Required for mitophagy. Also involved in endoplasmic reticulum-specific autophagic process and is essential for the survival of cells subjected to severe ER stress. Different machineries are required for anterograde trafficking to the PAS during either the Cvt pathway or bulk autophagy and for retrograde trafficking.</text>
</comment>
<comment type="catalytic activity">
    <reaction evidence="2">
        <text>a 1,2-diacyl-sn-glycero-3-phosphocholine(in) = a 1,2-diacyl-sn-glycero-3-phosphocholine(out)</text>
        <dbReference type="Rhea" id="RHEA:38571"/>
        <dbReference type="ChEBI" id="CHEBI:57643"/>
    </reaction>
</comment>
<comment type="catalytic activity">
    <reaction evidence="2">
        <text>a 1,2-diacyl-sn-glycero-3-phospho-L-serine(in) = a 1,2-diacyl-sn-glycero-3-phospho-L-serine(out)</text>
        <dbReference type="Rhea" id="RHEA:38663"/>
        <dbReference type="ChEBI" id="CHEBI:57262"/>
    </reaction>
</comment>
<comment type="catalytic activity">
    <reaction evidence="2">
        <text>a 1,2-diacyl-sn-glycero-3-phosphoethanolamine(in) = a 1,2-diacyl-sn-glycero-3-phosphoethanolamine(out)</text>
        <dbReference type="Rhea" id="RHEA:38895"/>
        <dbReference type="ChEBI" id="CHEBI:64612"/>
    </reaction>
</comment>
<comment type="catalytic activity">
    <reaction evidence="2">
        <text>a 1,2-diacyl-sn-glycero-3-phospho-(1D-myo-inositol-3-phosphate)(in) = a 1,2-diacyl-sn-glycero-3-phospho-(1D-myo-inositol-3-phosphate)(out)</text>
        <dbReference type="Rhea" id="RHEA:67920"/>
        <dbReference type="ChEBI" id="CHEBI:58088"/>
    </reaction>
</comment>
<comment type="subunit">
    <text evidence="1">Homotrimer; forms a homotrimer with a central pore that forms a path between the two membrane leaflets.</text>
</comment>
<comment type="subcellular location">
    <subcellularLocation>
        <location evidence="2">Preautophagosomal structure membrane</location>
        <topology evidence="2">Multi-pass membrane protein</topology>
    </subcellularLocation>
    <subcellularLocation>
        <location evidence="2">Cytoplasmic vesicle membrane</location>
        <topology evidence="2">Multi-pass membrane protein</topology>
    </subcellularLocation>
    <subcellularLocation>
        <location evidence="2">Golgi apparatus membrane</location>
        <topology evidence="2">Multi-pass membrane protein</topology>
    </subcellularLocation>
    <subcellularLocation>
        <location evidence="2">Endoplasmic reticulum membrane</location>
        <topology evidence="2">Multi-pass membrane protein</topology>
    </subcellularLocation>
</comment>
<comment type="domain">
    <text evidence="1">Forms a homotrimer with a solvated central pore, which is connected laterally to the cytosol through the cavity within each protomer. Acts as a lipid scramblase that uses its central pore to function: the central pore opens laterally to accommodate lipid headgroups, thereby enabling lipid flipping and redistribution of lipids added to the outer leaflet of ATG9-containing vesicles, thereby enabling growth into autophagosomes.</text>
</comment>
<comment type="PTM">
    <text evidence="2">Phosphorylated by ATG1. ATG1 phosphorylation is required for preautophagosome elongation.</text>
</comment>
<comment type="similarity">
    <text evidence="5">Belongs to the ATG9 family.</text>
</comment>
<sequence length="751" mass="84191">MRKLCGNGSTSMISTDSYKNTTFFVIAFSTFLISCIDYTKLFSSLSTPEAVGRLEDVLIGQCITKGSFAHTLFLIILSAFFIFQVANFAMSVPRLLDMYRFYTHLLGVPDADIQTLPWPEIVRLIGDIRKHNPVTSLSNGQATALADMVGNDAKAPVKKLDAHDIANRILRQENYLIALFNKDLLDLRVRIPVPHIFTAFIPSSMLILSADPPLPSLQSEPERKFLSFGANHLTKALEWNLRFCLLGYLFDRRGQVRKEFVREKRRKDLVQGLRRRFVFMGILNAIFAPFIILYLLIYSFFRYFEEYHKNPSSIGSRQYTPYAQWKFREFNELPHLFERRLDRSYETAKEYVDQFPKERTALVMRFVAFVAGSFAAVLLVASLIDPDLFLHFEITPHRTVLFYLGVFGSVLAISRGMVPQENMVFDPEASLNEVVRWTHYLPVEWRGQLHSQMVHQEFSKLFALKIMIFFSELLSVILTPFILFFSLPPCAAAIIDFFREFTVHVDGVGYVCSFAVFDFARHGNIDSNRPETGVQGATGPDAGDSGGGGGGGGGGFAAGKSGRQTTRRAASASPSRFKQKDWRSNENKMEQSFLHFKATHPDWQPSDPSSSLFLDRLMGAGARNRPAGGISGSIYGGGGGGGGGGGRGLGIDGSVMAEMEEERLRAKSQSYERAWAKSSHLHRPDISNPLRHPHSAASEIIEEEEGGEGDKGDDSIDGWSKRMKTDGESDDEQEEHGRLWKDDGVQIDIKQ</sequence>
<dbReference type="EMBL" id="AY421966">
    <property type="protein sequence ID" value="AAS92527.1"/>
    <property type="molecule type" value="Genomic_DNA"/>
</dbReference>
<dbReference type="SMR" id="Q6TGJ4"/>
<dbReference type="VEuPathDB" id="FungiDB:CGB_I1270C"/>
<dbReference type="VEuPathDB" id="FungiDB:CNBG_5852"/>
<dbReference type="VEuPathDB" id="FungiDB:I306_06625"/>
<dbReference type="VEuPathDB" id="FungiDB:I308_03655"/>
<dbReference type="VEuPathDB" id="FungiDB:I311_03678"/>
<dbReference type="VEuPathDB" id="FungiDB:I314_03643"/>
<dbReference type="GO" id="GO:0005776">
    <property type="term" value="C:autophagosome"/>
    <property type="evidence" value="ECO:0007669"/>
    <property type="project" value="TreeGrafter"/>
</dbReference>
<dbReference type="GO" id="GO:0030659">
    <property type="term" value="C:cytoplasmic vesicle membrane"/>
    <property type="evidence" value="ECO:0007669"/>
    <property type="project" value="UniProtKB-SubCell"/>
</dbReference>
<dbReference type="GO" id="GO:0005789">
    <property type="term" value="C:endoplasmic reticulum membrane"/>
    <property type="evidence" value="ECO:0007669"/>
    <property type="project" value="UniProtKB-SubCell"/>
</dbReference>
<dbReference type="GO" id="GO:0000139">
    <property type="term" value="C:Golgi membrane"/>
    <property type="evidence" value="ECO:0007669"/>
    <property type="project" value="UniProtKB-SubCell"/>
</dbReference>
<dbReference type="GO" id="GO:0034045">
    <property type="term" value="C:phagophore assembly site membrane"/>
    <property type="evidence" value="ECO:0007669"/>
    <property type="project" value="UniProtKB-SubCell"/>
</dbReference>
<dbReference type="GO" id="GO:0000422">
    <property type="term" value="P:autophagy of mitochondrion"/>
    <property type="evidence" value="ECO:0007669"/>
    <property type="project" value="TreeGrafter"/>
</dbReference>
<dbReference type="GO" id="GO:0006869">
    <property type="term" value="P:lipid transport"/>
    <property type="evidence" value="ECO:0007669"/>
    <property type="project" value="UniProtKB-KW"/>
</dbReference>
<dbReference type="GO" id="GO:0034727">
    <property type="term" value="P:piecemeal microautophagy of the nucleus"/>
    <property type="evidence" value="ECO:0007669"/>
    <property type="project" value="TreeGrafter"/>
</dbReference>
<dbReference type="GO" id="GO:0034497">
    <property type="term" value="P:protein localization to phagophore assembly site"/>
    <property type="evidence" value="ECO:0007669"/>
    <property type="project" value="TreeGrafter"/>
</dbReference>
<dbReference type="GO" id="GO:0061709">
    <property type="term" value="P:reticulophagy"/>
    <property type="evidence" value="ECO:0007669"/>
    <property type="project" value="TreeGrafter"/>
</dbReference>
<dbReference type="InterPro" id="IPR007241">
    <property type="entry name" value="Autophagy-rel_prot_9"/>
</dbReference>
<dbReference type="PANTHER" id="PTHR13038">
    <property type="entry name" value="APG9 AUTOPHAGY 9"/>
    <property type="match status" value="1"/>
</dbReference>
<dbReference type="PANTHER" id="PTHR13038:SF10">
    <property type="entry name" value="AUTOPHAGY-RELATED PROTEIN 9"/>
    <property type="match status" value="1"/>
</dbReference>
<dbReference type="Pfam" id="PF04109">
    <property type="entry name" value="ATG9"/>
    <property type="match status" value="1"/>
</dbReference>
<evidence type="ECO:0000250" key="1">
    <source>
        <dbReference type="UniProtKB" id="O74312"/>
    </source>
</evidence>
<evidence type="ECO:0000250" key="2">
    <source>
        <dbReference type="UniProtKB" id="Q12142"/>
    </source>
</evidence>
<evidence type="ECO:0000255" key="3"/>
<evidence type="ECO:0000256" key="4">
    <source>
        <dbReference type="SAM" id="MobiDB-lite"/>
    </source>
</evidence>
<evidence type="ECO:0000305" key="5"/>
<feature type="chain" id="PRO_0000119828" description="Autophagy-related protein 9">
    <location>
        <begin position="1"/>
        <end position="751"/>
    </location>
</feature>
<feature type="topological domain" description="Cytoplasmic" evidence="5">
    <location>
        <begin position="1"/>
        <end position="21"/>
    </location>
</feature>
<feature type="transmembrane region" description="Helical" evidence="3">
    <location>
        <begin position="22"/>
        <end position="42"/>
    </location>
</feature>
<feature type="topological domain" description="Lumenal" evidence="5">
    <location>
        <begin position="43"/>
        <end position="71"/>
    </location>
</feature>
<feature type="transmembrane region" description="Helical" evidence="3">
    <location>
        <begin position="72"/>
        <end position="92"/>
    </location>
</feature>
<feature type="topological domain" description="Cytoplasmic" evidence="5">
    <location>
        <begin position="93"/>
        <end position="276"/>
    </location>
</feature>
<feature type="intramembrane region" evidence="1">
    <location>
        <begin position="277"/>
        <end position="297"/>
    </location>
</feature>
<feature type="topological domain" description="Cytoplasmic" evidence="5">
    <location>
        <begin position="298"/>
        <end position="365"/>
    </location>
</feature>
<feature type="transmembrane region" description="Helical" evidence="3">
    <location>
        <begin position="366"/>
        <end position="386"/>
    </location>
</feature>
<feature type="topological domain" description="Lumenal" evidence="5">
    <location>
        <begin position="387"/>
        <end position="398"/>
    </location>
</feature>
<feature type="transmembrane region" description="Helical" evidence="3">
    <location>
        <begin position="399"/>
        <end position="419"/>
    </location>
</feature>
<feature type="topological domain" description="Cytoplasmic" evidence="5">
    <location>
        <begin position="420"/>
        <end position="465"/>
    </location>
</feature>
<feature type="intramembrane region" evidence="1">
    <location>
        <begin position="466"/>
        <end position="486"/>
    </location>
</feature>
<feature type="topological domain" description="Cytoplasmic" evidence="5">
    <location>
        <begin position="487"/>
        <end position="751"/>
    </location>
</feature>
<feature type="region of interest" description="Disordered" evidence="4">
    <location>
        <begin position="528"/>
        <end position="584"/>
    </location>
</feature>
<feature type="region of interest" description="Disordered" evidence="4">
    <location>
        <begin position="676"/>
        <end position="751"/>
    </location>
</feature>
<feature type="compositionally biased region" description="Gly residues" evidence="4">
    <location>
        <begin position="544"/>
        <end position="557"/>
    </location>
</feature>
<feature type="compositionally biased region" description="Polar residues" evidence="4">
    <location>
        <begin position="563"/>
        <end position="576"/>
    </location>
</feature>
<feature type="compositionally biased region" description="Basic and acidic residues" evidence="4">
    <location>
        <begin position="708"/>
        <end position="727"/>
    </location>
</feature>
<feature type="compositionally biased region" description="Basic and acidic residues" evidence="4">
    <location>
        <begin position="735"/>
        <end position="751"/>
    </location>
</feature>
<accession>Q6TGJ4</accession>
<keyword id="KW-0072">Autophagy</keyword>
<keyword id="KW-0968">Cytoplasmic vesicle</keyword>
<keyword id="KW-0256">Endoplasmic reticulum</keyword>
<keyword id="KW-0333">Golgi apparatus</keyword>
<keyword id="KW-0445">Lipid transport</keyword>
<keyword id="KW-0472">Membrane</keyword>
<keyword id="KW-0597">Phosphoprotein</keyword>
<keyword id="KW-0812">Transmembrane</keyword>
<keyword id="KW-1133">Transmembrane helix</keyword>
<keyword id="KW-0813">Transport</keyword>